<feature type="chain" id="PRO_0000228951" description="Small ribosomal subunit protein uS4c">
    <location>
        <begin position="1"/>
        <end position="201"/>
    </location>
</feature>
<feature type="domain" description="S4 RNA-binding">
    <location>
        <begin position="89"/>
        <end position="149"/>
    </location>
</feature>
<feature type="region of interest" description="Disordered" evidence="2">
    <location>
        <begin position="17"/>
        <end position="44"/>
    </location>
</feature>
<gene>
    <name type="primary">rps4</name>
</gene>
<geneLocation type="chloroplast"/>
<sequence>MSRYRGPRFKKIRRLGALPGLTNKKPRNGSDLRNQSRSGKKSQYRIRLEEKQKLRFHYGLTERQLLKYVRIARKAKGSTGQVLLQLLEMRLDNILFRLGMASTIPAARQLVNHRHILVNGRIVDIPSYRCKPRDIITAKDEQKSRALIQISLDSSPHEELPNHLTLHPFQYKGLVNQIIDSKWVGLKINELLVVEYYSRQT</sequence>
<comment type="function">
    <text evidence="1">One of the primary rRNA binding proteins, it binds directly to 16S rRNA where it nucleates assembly of the body of the 30S subunit.</text>
</comment>
<comment type="function">
    <text evidence="1">With S5 and S12 plays an important role in translational accuracy.</text>
</comment>
<comment type="subunit">
    <text evidence="1">Part of the 30S ribosomal subunit. Contacts protein S5. The interaction surface between S4 and S5 is involved in control of translational fidelity (By similarity).</text>
</comment>
<comment type="subcellular location">
    <subcellularLocation>
        <location>Plastid</location>
        <location>Chloroplast</location>
    </subcellularLocation>
</comment>
<comment type="similarity">
    <text evidence="3">Belongs to the universal ribosomal protein uS4 family.</text>
</comment>
<protein>
    <recommendedName>
        <fullName evidence="3">Small ribosomal subunit protein uS4c</fullName>
    </recommendedName>
    <alternativeName>
        <fullName>30S ribosomal protein S4, chloroplastic</fullName>
    </alternativeName>
</protein>
<reference key="1">
    <citation type="journal article" date="2006" name="Mol. Genet. Genomics">
        <title>The chloroplast genome of Nicotiana sylvestris and Nicotiana tomentosiformis: complete sequencing confirms that the Nicotiana sylvestris progenitor is the maternal genome donor of Nicotiana tabacum.</title>
        <authorList>
            <person name="Yukawa M."/>
            <person name="Tsudzuki T."/>
            <person name="Sugiura M."/>
        </authorList>
    </citation>
    <scope>NUCLEOTIDE SEQUENCE [LARGE SCALE GENOMIC DNA]</scope>
</reference>
<dbReference type="EMBL" id="AB237912">
    <property type="protein sequence ID" value="BAE46652.1"/>
    <property type="molecule type" value="Genomic_DNA"/>
</dbReference>
<dbReference type="RefSeq" id="YP_358677.1">
    <property type="nucleotide sequence ID" value="NC_007500.1"/>
</dbReference>
<dbReference type="SMR" id="Q3C1H5"/>
<dbReference type="GeneID" id="3735197"/>
<dbReference type="KEGG" id="nsy:3735197"/>
<dbReference type="OrthoDB" id="19266at4085"/>
<dbReference type="Proteomes" id="UP000189701">
    <property type="component" value="Chloroplast Pltd"/>
</dbReference>
<dbReference type="GO" id="GO:0009507">
    <property type="term" value="C:chloroplast"/>
    <property type="evidence" value="ECO:0007669"/>
    <property type="project" value="UniProtKB-SubCell"/>
</dbReference>
<dbReference type="GO" id="GO:0015935">
    <property type="term" value="C:small ribosomal subunit"/>
    <property type="evidence" value="ECO:0007669"/>
    <property type="project" value="InterPro"/>
</dbReference>
<dbReference type="GO" id="GO:0019843">
    <property type="term" value="F:rRNA binding"/>
    <property type="evidence" value="ECO:0007669"/>
    <property type="project" value="UniProtKB-UniRule"/>
</dbReference>
<dbReference type="GO" id="GO:0003735">
    <property type="term" value="F:structural constituent of ribosome"/>
    <property type="evidence" value="ECO:0007669"/>
    <property type="project" value="InterPro"/>
</dbReference>
<dbReference type="GO" id="GO:0042274">
    <property type="term" value="P:ribosomal small subunit biogenesis"/>
    <property type="evidence" value="ECO:0007669"/>
    <property type="project" value="TreeGrafter"/>
</dbReference>
<dbReference type="GO" id="GO:0006412">
    <property type="term" value="P:translation"/>
    <property type="evidence" value="ECO:0007669"/>
    <property type="project" value="UniProtKB-UniRule"/>
</dbReference>
<dbReference type="CDD" id="cd00165">
    <property type="entry name" value="S4"/>
    <property type="match status" value="1"/>
</dbReference>
<dbReference type="FunFam" id="1.10.1050.10:FF:000002">
    <property type="entry name" value="30S ribosomal protein S4, chloroplastic"/>
    <property type="match status" value="1"/>
</dbReference>
<dbReference type="FunFam" id="3.10.290.10:FF:000081">
    <property type="entry name" value="30S ribosomal protein S4, chloroplastic"/>
    <property type="match status" value="1"/>
</dbReference>
<dbReference type="Gene3D" id="1.10.1050.10">
    <property type="entry name" value="Ribosomal Protein S4 Delta 41, Chain A, domain 1"/>
    <property type="match status" value="1"/>
</dbReference>
<dbReference type="Gene3D" id="3.10.290.10">
    <property type="entry name" value="RNA-binding S4 domain"/>
    <property type="match status" value="1"/>
</dbReference>
<dbReference type="HAMAP" id="MF_01306_B">
    <property type="entry name" value="Ribosomal_uS4_B"/>
    <property type="match status" value="1"/>
</dbReference>
<dbReference type="InterPro" id="IPR022801">
    <property type="entry name" value="Ribosomal_uS4"/>
</dbReference>
<dbReference type="InterPro" id="IPR005709">
    <property type="entry name" value="Ribosomal_uS4_bac-type"/>
</dbReference>
<dbReference type="InterPro" id="IPR018079">
    <property type="entry name" value="Ribosomal_uS4_CS"/>
</dbReference>
<dbReference type="InterPro" id="IPR001912">
    <property type="entry name" value="Ribosomal_uS4_N"/>
</dbReference>
<dbReference type="InterPro" id="IPR002942">
    <property type="entry name" value="S4_RNA-bd"/>
</dbReference>
<dbReference type="InterPro" id="IPR036986">
    <property type="entry name" value="S4_RNA-bd_sf"/>
</dbReference>
<dbReference type="NCBIfam" id="NF003717">
    <property type="entry name" value="PRK05327.1"/>
    <property type="match status" value="1"/>
</dbReference>
<dbReference type="NCBIfam" id="TIGR01017">
    <property type="entry name" value="rpsD_bact"/>
    <property type="match status" value="1"/>
</dbReference>
<dbReference type="PANTHER" id="PTHR11831">
    <property type="entry name" value="30S 40S RIBOSOMAL PROTEIN"/>
    <property type="match status" value="1"/>
</dbReference>
<dbReference type="PANTHER" id="PTHR11831:SF4">
    <property type="entry name" value="SMALL RIBOSOMAL SUBUNIT PROTEIN US4M"/>
    <property type="match status" value="1"/>
</dbReference>
<dbReference type="Pfam" id="PF00163">
    <property type="entry name" value="Ribosomal_S4"/>
    <property type="match status" value="1"/>
</dbReference>
<dbReference type="Pfam" id="PF01479">
    <property type="entry name" value="S4"/>
    <property type="match status" value="1"/>
</dbReference>
<dbReference type="SMART" id="SM01390">
    <property type="entry name" value="Ribosomal_S4"/>
    <property type="match status" value="1"/>
</dbReference>
<dbReference type="SMART" id="SM00363">
    <property type="entry name" value="S4"/>
    <property type="match status" value="1"/>
</dbReference>
<dbReference type="SUPFAM" id="SSF55174">
    <property type="entry name" value="Alpha-L RNA-binding motif"/>
    <property type="match status" value="1"/>
</dbReference>
<dbReference type="PROSITE" id="PS00632">
    <property type="entry name" value="RIBOSOMAL_S4"/>
    <property type="match status" value="1"/>
</dbReference>
<dbReference type="PROSITE" id="PS50889">
    <property type="entry name" value="S4"/>
    <property type="match status" value="1"/>
</dbReference>
<name>RR4_NICSY</name>
<proteinExistence type="inferred from homology"/>
<keyword id="KW-0150">Chloroplast</keyword>
<keyword id="KW-0934">Plastid</keyword>
<keyword id="KW-1185">Reference proteome</keyword>
<keyword id="KW-0687">Ribonucleoprotein</keyword>
<keyword id="KW-0689">Ribosomal protein</keyword>
<keyword id="KW-0694">RNA-binding</keyword>
<keyword id="KW-0699">rRNA-binding</keyword>
<accession>Q3C1H5</accession>
<evidence type="ECO:0000250" key="1"/>
<evidence type="ECO:0000256" key="2">
    <source>
        <dbReference type="SAM" id="MobiDB-lite"/>
    </source>
</evidence>
<evidence type="ECO:0000305" key="3"/>
<organism>
    <name type="scientific">Nicotiana sylvestris</name>
    <name type="common">Wood tobacco</name>
    <name type="synonym">South American tobacco</name>
    <dbReference type="NCBI Taxonomy" id="4096"/>
    <lineage>
        <taxon>Eukaryota</taxon>
        <taxon>Viridiplantae</taxon>
        <taxon>Streptophyta</taxon>
        <taxon>Embryophyta</taxon>
        <taxon>Tracheophyta</taxon>
        <taxon>Spermatophyta</taxon>
        <taxon>Magnoliopsida</taxon>
        <taxon>eudicotyledons</taxon>
        <taxon>Gunneridae</taxon>
        <taxon>Pentapetalae</taxon>
        <taxon>asterids</taxon>
        <taxon>lamiids</taxon>
        <taxon>Solanales</taxon>
        <taxon>Solanaceae</taxon>
        <taxon>Nicotianoideae</taxon>
        <taxon>Nicotianeae</taxon>
        <taxon>Nicotiana</taxon>
    </lineage>
</organism>